<accession>Q9HYF9</accession>
<proteinExistence type="inferred from homology"/>
<evidence type="ECO:0000255" key="1">
    <source>
        <dbReference type="HAMAP-Rule" id="MF_01724"/>
    </source>
</evidence>
<gene>
    <name evidence="1" type="primary">ssuB2</name>
    <name type="ordered locus">PA3447</name>
</gene>
<dbReference type="EC" id="7.6.2.14" evidence="1"/>
<dbReference type="EMBL" id="AE004091">
    <property type="protein sequence ID" value="AAG06835.1"/>
    <property type="molecule type" value="Genomic_DNA"/>
</dbReference>
<dbReference type="PIR" id="D83215">
    <property type="entry name" value="D83215"/>
</dbReference>
<dbReference type="RefSeq" id="NP_252137.1">
    <property type="nucleotide sequence ID" value="NC_002516.2"/>
</dbReference>
<dbReference type="RefSeq" id="WP_003091922.1">
    <property type="nucleotide sequence ID" value="NZ_QZGE01000037.1"/>
</dbReference>
<dbReference type="SMR" id="Q9HYF9"/>
<dbReference type="STRING" id="208964.PA3447"/>
<dbReference type="PaxDb" id="208964-PA3447"/>
<dbReference type="DNASU" id="879616"/>
<dbReference type="GeneID" id="879616"/>
<dbReference type="KEGG" id="pae:PA3447"/>
<dbReference type="PATRIC" id="fig|208964.12.peg.3609"/>
<dbReference type="PseudoCAP" id="PA3447"/>
<dbReference type="HOGENOM" id="CLU_000604_1_22_6"/>
<dbReference type="InParanoid" id="Q9HYF9"/>
<dbReference type="OrthoDB" id="9802264at2"/>
<dbReference type="PhylomeDB" id="Q9HYF9"/>
<dbReference type="BioCyc" id="PAER208964:G1FZ6-3515-MONOMER"/>
<dbReference type="Proteomes" id="UP000002438">
    <property type="component" value="Chromosome"/>
</dbReference>
<dbReference type="GO" id="GO:0005886">
    <property type="term" value="C:plasma membrane"/>
    <property type="evidence" value="ECO:0007669"/>
    <property type="project" value="UniProtKB-SubCell"/>
</dbReference>
<dbReference type="GO" id="GO:0005524">
    <property type="term" value="F:ATP binding"/>
    <property type="evidence" value="ECO:0007669"/>
    <property type="project" value="UniProtKB-KW"/>
</dbReference>
<dbReference type="GO" id="GO:0016887">
    <property type="term" value="F:ATP hydrolysis activity"/>
    <property type="evidence" value="ECO:0007669"/>
    <property type="project" value="InterPro"/>
</dbReference>
<dbReference type="Gene3D" id="3.40.50.300">
    <property type="entry name" value="P-loop containing nucleotide triphosphate hydrolases"/>
    <property type="match status" value="1"/>
</dbReference>
<dbReference type="InterPro" id="IPR003593">
    <property type="entry name" value="AAA+_ATPase"/>
</dbReference>
<dbReference type="InterPro" id="IPR003439">
    <property type="entry name" value="ABC_transporter-like_ATP-bd"/>
</dbReference>
<dbReference type="InterPro" id="IPR017871">
    <property type="entry name" value="ABC_transporter-like_CS"/>
</dbReference>
<dbReference type="InterPro" id="IPR050166">
    <property type="entry name" value="ABC_transporter_ATP-bind"/>
</dbReference>
<dbReference type="InterPro" id="IPR027417">
    <property type="entry name" value="P-loop_NTPase"/>
</dbReference>
<dbReference type="PANTHER" id="PTHR42788:SF19">
    <property type="entry name" value="ALIPHATIC SULFONATES IMPORT ATP-BINDING PROTEIN SSUB 2"/>
    <property type="match status" value="1"/>
</dbReference>
<dbReference type="PANTHER" id="PTHR42788">
    <property type="entry name" value="TAURINE IMPORT ATP-BINDING PROTEIN-RELATED"/>
    <property type="match status" value="1"/>
</dbReference>
<dbReference type="Pfam" id="PF00005">
    <property type="entry name" value="ABC_tran"/>
    <property type="match status" value="1"/>
</dbReference>
<dbReference type="SMART" id="SM00382">
    <property type="entry name" value="AAA"/>
    <property type="match status" value="1"/>
</dbReference>
<dbReference type="SUPFAM" id="SSF52540">
    <property type="entry name" value="P-loop containing nucleoside triphosphate hydrolases"/>
    <property type="match status" value="1"/>
</dbReference>
<dbReference type="PROSITE" id="PS00211">
    <property type="entry name" value="ABC_TRANSPORTER_1"/>
    <property type="match status" value="1"/>
</dbReference>
<dbReference type="PROSITE" id="PS50893">
    <property type="entry name" value="ABC_TRANSPORTER_2"/>
    <property type="match status" value="1"/>
</dbReference>
<dbReference type="PROSITE" id="PS51291">
    <property type="entry name" value="SSUB"/>
    <property type="match status" value="1"/>
</dbReference>
<comment type="function">
    <text evidence="1">Part of the ABC transporter complex SsuABC involved in aliphatic sulfonates import. Responsible for energy coupling to the transport system.</text>
</comment>
<comment type="catalytic activity">
    <reaction evidence="1">
        <text>ATP + H2O + aliphatic sulfonate-[sulfonate-binding protein]Side 1 = ADP + phosphate + aliphatic sulfonateSide 2 + [sulfonate-binding protein]Side 1.</text>
        <dbReference type="EC" id="7.6.2.14"/>
    </reaction>
</comment>
<comment type="subunit">
    <text evidence="1">The complex is composed of two ATP-binding proteins (SsuB), two transmembrane proteins (SsuC) and a solute-binding protein (SsuA).</text>
</comment>
<comment type="subcellular location">
    <subcellularLocation>
        <location evidence="1">Cell inner membrane</location>
        <topology evidence="1">Peripheral membrane protein</topology>
    </subcellularLocation>
</comment>
<comment type="similarity">
    <text evidence="1">Belongs to the ABC transporter superfamily. Aliphatic sulfonates importer (TC 3.A.1.17.2) family.</text>
</comment>
<keyword id="KW-0067">ATP-binding</keyword>
<keyword id="KW-0997">Cell inner membrane</keyword>
<keyword id="KW-1003">Cell membrane</keyword>
<keyword id="KW-0472">Membrane</keyword>
<keyword id="KW-0547">Nucleotide-binding</keyword>
<keyword id="KW-1185">Reference proteome</keyword>
<keyword id="KW-1278">Translocase</keyword>
<keyword id="KW-0813">Transport</keyword>
<sequence length="249" mass="27144">MSGLLDLLEIRKAYGDTRVLEGVALSLAPGEVVSLLGPSGCGKSTLLRIAAGLDDDFQGTVERNPILGFGPDGENGRSGGIGVVFQEPRLLPWLTVAQNVGFADGWLEDEHWVERLLADVGLAGCGGLLPKQLSGGMAQRAAIARGLYGRPQVLLLDEPFSAVDAFTRMRLQDLLQDVVQNYEISVLLVTHDLDEAFYLADRVLLMGGRPGHIRREFHVPLARPRDRRAVELAYLRGEALTEMQRAHVL</sequence>
<feature type="chain" id="PRO_0000279928" description="Aliphatic sulfonates import ATP-binding protein SsuB 2">
    <location>
        <begin position="1"/>
        <end position="249"/>
    </location>
</feature>
<feature type="domain" description="ABC transporter" evidence="1">
    <location>
        <begin position="5"/>
        <end position="233"/>
    </location>
</feature>
<feature type="binding site" evidence="1">
    <location>
        <begin position="37"/>
        <end position="44"/>
    </location>
    <ligand>
        <name>ATP</name>
        <dbReference type="ChEBI" id="CHEBI:30616"/>
    </ligand>
</feature>
<name>SSUB2_PSEAE</name>
<protein>
    <recommendedName>
        <fullName evidence="1">Aliphatic sulfonates import ATP-binding protein SsuB 2</fullName>
        <ecNumber evidence="1">7.6.2.14</ecNumber>
    </recommendedName>
</protein>
<reference key="1">
    <citation type="journal article" date="2000" name="Nature">
        <title>Complete genome sequence of Pseudomonas aeruginosa PAO1, an opportunistic pathogen.</title>
        <authorList>
            <person name="Stover C.K."/>
            <person name="Pham X.-Q.T."/>
            <person name="Erwin A.L."/>
            <person name="Mizoguchi S.D."/>
            <person name="Warrener P."/>
            <person name="Hickey M.J."/>
            <person name="Brinkman F.S.L."/>
            <person name="Hufnagle W.O."/>
            <person name="Kowalik D.J."/>
            <person name="Lagrou M."/>
            <person name="Garber R.L."/>
            <person name="Goltry L."/>
            <person name="Tolentino E."/>
            <person name="Westbrock-Wadman S."/>
            <person name="Yuan Y."/>
            <person name="Brody L.L."/>
            <person name="Coulter S.N."/>
            <person name="Folger K.R."/>
            <person name="Kas A."/>
            <person name="Larbig K."/>
            <person name="Lim R.M."/>
            <person name="Smith K.A."/>
            <person name="Spencer D.H."/>
            <person name="Wong G.K.-S."/>
            <person name="Wu Z."/>
            <person name="Paulsen I.T."/>
            <person name="Reizer J."/>
            <person name="Saier M.H. Jr."/>
            <person name="Hancock R.E.W."/>
            <person name="Lory S."/>
            <person name="Olson M.V."/>
        </authorList>
    </citation>
    <scope>NUCLEOTIDE SEQUENCE [LARGE SCALE GENOMIC DNA]</scope>
    <source>
        <strain>ATCC 15692 / DSM 22644 / CIP 104116 / JCM 14847 / LMG 12228 / 1C / PRS 101 / PAO1</strain>
    </source>
</reference>
<organism>
    <name type="scientific">Pseudomonas aeruginosa (strain ATCC 15692 / DSM 22644 / CIP 104116 / JCM 14847 / LMG 12228 / 1C / PRS 101 / PAO1)</name>
    <dbReference type="NCBI Taxonomy" id="208964"/>
    <lineage>
        <taxon>Bacteria</taxon>
        <taxon>Pseudomonadati</taxon>
        <taxon>Pseudomonadota</taxon>
        <taxon>Gammaproteobacteria</taxon>
        <taxon>Pseudomonadales</taxon>
        <taxon>Pseudomonadaceae</taxon>
        <taxon>Pseudomonas</taxon>
    </lineage>
</organism>